<dbReference type="EMBL" id="AB576176">
    <property type="protein sequence ID" value="BAJ14705.1"/>
    <property type="molecule type" value="mRNA"/>
</dbReference>
<dbReference type="EMBL" id="AK058084">
    <property type="protein sequence ID" value="BAB71655.1"/>
    <property type="molecule type" value="mRNA"/>
</dbReference>
<dbReference type="EMBL" id="AC008764">
    <property type="status" value="NOT_ANNOTATED_CDS"/>
    <property type="molecule type" value="Genomic_DNA"/>
</dbReference>
<dbReference type="EMBL" id="CH471106">
    <property type="protein sequence ID" value="EAW84546.1"/>
    <property type="molecule type" value="Genomic_DNA"/>
</dbReference>
<dbReference type="EMBL" id="BC014595">
    <property type="protein sequence ID" value="AAH14595.1"/>
    <property type="molecule type" value="mRNA"/>
</dbReference>
<dbReference type="CCDS" id="CCDS12344.1"/>
<dbReference type="RefSeq" id="NP_659483.2">
    <property type="nucleotide sequence ID" value="NM_145046.5"/>
</dbReference>
<dbReference type="SMR" id="Q96L12"/>
<dbReference type="BioGRID" id="125941">
    <property type="interactions" value="141"/>
</dbReference>
<dbReference type="FunCoup" id="Q96L12">
    <property type="interactions" value="228"/>
</dbReference>
<dbReference type="IntAct" id="Q96L12">
    <property type="interactions" value="17"/>
</dbReference>
<dbReference type="MINT" id="Q96L12"/>
<dbReference type="STRING" id="9606.ENSP00000269881"/>
<dbReference type="DrugBank" id="DB11093">
    <property type="generic name" value="Calcium citrate"/>
</dbReference>
<dbReference type="DrugBank" id="DB11348">
    <property type="generic name" value="Calcium Phosphate"/>
</dbReference>
<dbReference type="DrugBank" id="DB14481">
    <property type="generic name" value="Calcium phosphate dihydrate"/>
</dbReference>
<dbReference type="GlyCosmos" id="Q96L12">
    <property type="glycosylation" value="2 sites, No reported glycans"/>
</dbReference>
<dbReference type="GlyGen" id="Q96L12">
    <property type="glycosylation" value="2 sites"/>
</dbReference>
<dbReference type="iPTMnet" id="Q96L12"/>
<dbReference type="PhosphoSitePlus" id="Q96L12"/>
<dbReference type="BioMuta" id="CALR3"/>
<dbReference type="DMDM" id="116241279"/>
<dbReference type="jPOST" id="Q96L12"/>
<dbReference type="MassIVE" id="Q96L12"/>
<dbReference type="PaxDb" id="9606-ENSP00000269881"/>
<dbReference type="PeptideAtlas" id="Q96L12"/>
<dbReference type="ProteomicsDB" id="77137"/>
<dbReference type="Pumba" id="Q96L12"/>
<dbReference type="Antibodypedia" id="66699">
    <property type="antibodies" value="339 antibodies from 29 providers"/>
</dbReference>
<dbReference type="DNASU" id="125972"/>
<dbReference type="Ensembl" id="ENST00000269881.8">
    <property type="protein sequence ID" value="ENSP00000269881.3"/>
    <property type="gene ID" value="ENSG00000269058.6"/>
</dbReference>
<dbReference type="GeneID" id="125972"/>
<dbReference type="KEGG" id="hsa:125972"/>
<dbReference type="MANE-Select" id="ENST00000269881.8">
    <property type="protein sequence ID" value="ENSP00000269881.3"/>
    <property type="RefSeq nucleotide sequence ID" value="NM_145046.5"/>
    <property type="RefSeq protein sequence ID" value="NP_659483.2"/>
</dbReference>
<dbReference type="UCSC" id="uc002ned.3">
    <property type="organism name" value="human"/>
</dbReference>
<dbReference type="AGR" id="HGNC:20407"/>
<dbReference type="CTD" id="125972"/>
<dbReference type="DisGeNET" id="125972"/>
<dbReference type="GeneCards" id="CALR3"/>
<dbReference type="HGNC" id="HGNC:20407">
    <property type="gene designation" value="CALR3"/>
</dbReference>
<dbReference type="HPA" id="ENSG00000269058">
    <property type="expression patterns" value="Tissue enriched (testis)"/>
</dbReference>
<dbReference type="MalaCards" id="CALR3"/>
<dbReference type="MIM" id="611414">
    <property type="type" value="gene"/>
</dbReference>
<dbReference type="neXtProt" id="NX_Q96L12"/>
<dbReference type="OpenTargets" id="ENSG00000269058"/>
<dbReference type="PharmGKB" id="PA134922944"/>
<dbReference type="VEuPathDB" id="HostDB:ENSG00000269058"/>
<dbReference type="eggNOG" id="KOG0674">
    <property type="taxonomic scope" value="Eukaryota"/>
</dbReference>
<dbReference type="GeneTree" id="ENSGT00950000182915"/>
<dbReference type="HOGENOM" id="CLU_018224_0_0_1"/>
<dbReference type="InParanoid" id="Q96L12"/>
<dbReference type="OMA" id="HYFNRFH"/>
<dbReference type="OrthoDB" id="1938156at2759"/>
<dbReference type="PAN-GO" id="Q96L12">
    <property type="GO annotations" value="3 GO annotations based on evolutionary models"/>
</dbReference>
<dbReference type="PhylomeDB" id="Q96L12"/>
<dbReference type="TreeFam" id="TF338438"/>
<dbReference type="PathwayCommons" id="Q96L12"/>
<dbReference type="SignaLink" id="Q96L12"/>
<dbReference type="BioGRID-ORCS" id="125972">
    <property type="hits" value="27 hits in 1143 CRISPR screens"/>
</dbReference>
<dbReference type="CD-CODE" id="DEE660B4">
    <property type="entry name" value="Stress granule"/>
</dbReference>
<dbReference type="GenomeRNAi" id="125972"/>
<dbReference type="Pharos" id="Q96L12">
    <property type="development level" value="Tbio"/>
</dbReference>
<dbReference type="PRO" id="PR:Q96L12"/>
<dbReference type="Proteomes" id="UP000005640">
    <property type="component" value="Chromosome 19"/>
</dbReference>
<dbReference type="RNAct" id="Q96L12">
    <property type="molecule type" value="protein"/>
</dbReference>
<dbReference type="Bgee" id="ENSG00000269058">
    <property type="expression patterns" value="Expressed in right testis and 42 other cell types or tissues"/>
</dbReference>
<dbReference type="ExpressionAtlas" id="Q96L12">
    <property type="expression patterns" value="baseline and differential"/>
</dbReference>
<dbReference type="GO" id="GO:0005788">
    <property type="term" value="C:endoplasmic reticulum lumen"/>
    <property type="evidence" value="ECO:0000314"/>
    <property type="project" value="UniProtKB"/>
</dbReference>
<dbReference type="GO" id="GO:0005789">
    <property type="term" value="C:endoplasmic reticulum membrane"/>
    <property type="evidence" value="ECO:0000318"/>
    <property type="project" value="GO_Central"/>
</dbReference>
<dbReference type="GO" id="GO:0005635">
    <property type="term" value="C:nuclear envelope"/>
    <property type="evidence" value="ECO:0000314"/>
    <property type="project" value="UniProtKB"/>
</dbReference>
<dbReference type="GO" id="GO:0030246">
    <property type="term" value="F:carbohydrate binding"/>
    <property type="evidence" value="ECO:0007669"/>
    <property type="project" value="UniProtKB-KW"/>
</dbReference>
<dbReference type="GO" id="GO:0046872">
    <property type="term" value="F:metal ion binding"/>
    <property type="evidence" value="ECO:0007669"/>
    <property type="project" value="UniProtKB-KW"/>
</dbReference>
<dbReference type="GO" id="GO:0044183">
    <property type="term" value="F:protein folding chaperone"/>
    <property type="evidence" value="ECO:0007669"/>
    <property type="project" value="Ensembl"/>
</dbReference>
<dbReference type="GO" id="GO:0051082">
    <property type="term" value="F:unfolded protein binding"/>
    <property type="evidence" value="ECO:0007669"/>
    <property type="project" value="InterPro"/>
</dbReference>
<dbReference type="GO" id="GO:0030154">
    <property type="term" value="P:cell differentiation"/>
    <property type="evidence" value="ECO:0007669"/>
    <property type="project" value="UniProtKB-KW"/>
</dbReference>
<dbReference type="GO" id="GO:0036503">
    <property type="term" value="P:ERAD pathway"/>
    <property type="evidence" value="ECO:0000318"/>
    <property type="project" value="GO_Central"/>
</dbReference>
<dbReference type="GO" id="GO:0006457">
    <property type="term" value="P:protein folding"/>
    <property type="evidence" value="ECO:0000318"/>
    <property type="project" value="GO_Central"/>
</dbReference>
<dbReference type="GO" id="GO:0007283">
    <property type="term" value="P:spermatogenesis"/>
    <property type="evidence" value="ECO:0007669"/>
    <property type="project" value="UniProtKB-KW"/>
</dbReference>
<dbReference type="FunFam" id="2.60.120.200:FF:000122">
    <property type="entry name" value="Calreticulin 3"/>
    <property type="match status" value="1"/>
</dbReference>
<dbReference type="FunFam" id="2.60.120.200:FF:000339">
    <property type="entry name" value="Calreticulin 3"/>
    <property type="match status" value="1"/>
</dbReference>
<dbReference type="Gene3D" id="2.60.120.200">
    <property type="match status" value="2"/>
</dbReference>
<dbReference type="InterPro" id="IPR001580">
    <property type="entry name" value="Calret/calnex"/>
</dbReference>
<dbReference type="InterPro" id="IPR018124">
    <property type="entry name" value="Calret/calnex_CS"/>
</dbReference>
<dbReference type="InterPro" id="IPR009169">
    <property type="entry name" value="Calreticulin"/>
</dbReference>
<dbReference type="InterPro" id="IPR009033">
    <property type="entry name" value="Calreticulin/calnexin_P_dom_sf"/>
</dbReference>
<dbReference type="InterPro" id="IPR013320">
    <property type="entry name" value="ConA-like_dom_sf"/>
</dbReference>
<dbReference type="PANTHER" id="PTHR11073">
    <property type="entry name" value="CALRETICULIN AND CALNEXIN"/>
    <property type="match status" value="1"/>
</dbReference>
<dbReference type="PANTHER" id="PTHR11073:SF3">
    <property type="entry name" value="CALRETICULIN-3"/>
    <property type="match status" value="1"/>
</dbReference>
<dbReference type="Pfam" id="PF00262">
    <property type="entry name" value="Calreticulin"/>
    <property type="match status" value="2"/>
</dbReference>
<dbReference type="PIRSF" id="PIRSF002356">
    <property type="entry name" value="Calreticulin"/>
    <property type="match status" value="1"/>
</dbReference>
<dbReference type="PRINTS" id="PR00626">
    <property type="entry name" value="CALRETICULIN"/>
</dbReference>
<dbReference type="SUPFAM" id="SSF49899">
    <property type="entry name" value="Concanavalin A-like lectins/glucanases"/>
    <property type="match status" value="1"/>
</dbReference>
<dbReference type="SUPFAM" id="SSF63887">
    <property type="entry name" value="P-domain of calnexin/calreticulin"/>
    <property type="match status" value="1"/>
</dbReference>
<dbReference type="PROSITE" id="PS00803">
    <property type="entry name" value="CALRETICULIN_1"/>
    <property type="match status" value="1"/>
</dbReference>
<dbReference type="PROSITE" id="PS00804">
    <property type="entry name" value="CALRETICULIN_2"/>
    <property type="match status" value="1"/>
</dbReference>
<dbReference type="PROSITE" id="PS00014">
    <property type="entry name" value="ER_TARGET"/>
    <property type="match status" value="1"/>
</dbReference>
<keyword id="KW-0122">Cardiomyopathy</keyword>
<keyword id="KW-0143">Chaperone</keyword>
<keyword id="KW-0221">Differentiation</keyword>
<keyword id="KW-1015">Disulfide bond</keyword>
<keyword id="KW-0256">Endoplasmic reticulum</keyword>
<keyword id="KW-0325">Glycoprotein</keyword>
<keyword id="KW-0430">Lectin</keyword>
<keyword id="KW-0479">Metal-binding</keyword>
<keyword id="KW-1267">Proteomics identification</keyword>
<keyword id="KW-1185">Reference proteome</keyword>
<keyword id="KW-0677">Repeat</keyword>
<keyword id="KW-0732">Signal</keyword>
<keyword id="KW-0744">Spermatogenesis</keyword>
<keyword id="KW-0862">Zinc</keyword>
<evidence type="ECO:0000250" key="1"/>
<evidence type="ECO:0000250" key="2">
    <source>
        <dbReference type="UniProtKB" id="P14211"/>
    </source>
</evidence>
<evidence type="ECO:0000255" key="3"/>
<evidence type="ECO:0000255" key="4">
    <source>
        <dbReference type="PROSITE-ProRule" id="PRU10138"/>
    </source>
</evidence>
<evidence type="ECO:0000269" key="5">
    <source>
    </source>
</evidence>
<evidence type="ECO:0000269" key="6">
    <source>
    </source>
</evidence>
<evidence type="ECO:0000269" key="7">
    <source>
    </source>
</evidence>
<evidence type="ECO:0000269" key="8">
    <source>
    </source>
</evidence>
<evidence type="ECO:0000305" key="9"/>
<comment type="function">
    <text evidence="1 8">During spermatogenesis, may act as a lectin-independent chaperone for specific client proteins such as ADAM3. Required for sperm fertility (By similarity). CALR3 capacity for calcium-binding may be absent or much lower than that of CALR.</text>
</comment>
<comment type="subunit">
    <text evidence="1">Component of an EIF2 complex at least composed of CELF1/CUGBP1, CALR, CALR3, EIF2S1, EIF2S2, HSP90B1 and HSPA5.</text>
</comment>
<comment type="subcellular location">
    <subcellularLocation>
        <location evidence="4 8">Endoplasmic reticulum lumen</location>
    </subcellularLocation>
</comment>
<comment type="tissue specificity">
    <text evidence="5">Testis specific.</text>
</comment>
<comment type="domain">
    <text evidence="1">Can be divided into a N-terminal globular domain, a proline-rich P-domain forming an elongated arm-like structure and a C-terminal acidic domain. The P-domain binds one molecule of calcium with high affinity, whereas the acidic C-domain binds multiple calcium ions with low affinity (By similarity).</text>
</comment>
<comment type="domain">
    <text evidence="1">The interaction with glycans occurs through a binding site in the globular lectin domain.</text>
</comment>
<comment type="domain">
    <text evidence="1">The zinc binding sites are localized to the N-domain.</text>
</comment>
<comment type="similarity">
    <text evidence="9">Belongs to the calreticulin family.</text>
</comment>
<accession>Q96L12</accession>
<accession>D9N574</accession>
<accession>Q96LN3</accession>
<sequence>MARALVQLWAICMLRVALATVYFQEEFLDGEHWRNRWLQSTNDSRFGHFRLSSGKFYGHKEKDKGLQTTQNGRFYAISARFKPFSNKGKTLVIQYTVKHEQKMDCGGGYIKVFPADIDQKNLNGKSQYYIMFGPDICGFDIKKVHVILHFKNKYHENKKLIRCKVDGFTHLYTLILRPDLSYDVKIDGQSIESGSIEYDWNLTSLKKETSPAESKDWEQTKDNKAQDWEKHFLDASTSKQSDWNGDLDGDWPAPMLQKPPYQDGLKPEGIHKDVWLHRKMKNTDYLTQYDLSEFENIGAIGLELWQVRSGTIFDNFLITDDEEYADNFGKATWGETKGPEREMDAIQAKEEMKKAREEEEEELLSGKINRHEHYFNQFHRRNEL</sequence>
<feature type="signal peptide" evidence="3">
    <location>
        <begin position="1"/>
        <end position="19"/>
    </location>
</feature>
<feature type="chain" id="PRO_0000004178" description="Calreticulin-3">
    <location>
        <begin position="20"/>
        <end position="384"/>
    </location>
</feature>
<feature type="repeat" description="1-1">
    <location>
        <begin position="191"/>
        <end position="202"/>
    </location>
</feature>
<feature type="repeat" description="1-2">
    <location>
        <begin position="208"/>
        <end position="219"/>
    </location>
</feature>
<feature type="repeat" description="1-3">
    <location>
        <begin position="221"/>
        <end position="230"/>
    </location>
</feature>
<feature type="repeat" description="1-4">
    <location>
        <begin position="234"/>
        <end position="245"/>
    </location>
</feature>
<feature type="repeat" description="2-1">
    <location>
        <begin position="249"/>
        <end position="259"/>
    </location>
</feature>
<feature type="repeat" description="2-2">
    <location>
        <begin position="263"/>
        <end position="271"/>
    </location>
</feature>
<feature type="repeat" description="2-3">
    <location>
        <begin position="273"/>
        <end position="283"/>
    </location>
</feature>
<feature type="region of interest" description="N-domain">
    <location>
        <begin position="20"/>
        <end position="197"/>
    </location>
</feature>
<feature type="region of interest" description="4 X approximate repeats">
    <location>
        <begin position="191"/>
        <end position="245"/>
    </location>
</feature>
<feature type="region of interest" description="P-domain">
    <location>
        <begin position="198"/>
        <end position="294"/>
    </location>
</feature>
<feature type="region of interest" description="3 X approximate repeats">
    <location>
        <begin position="249"/>
        <end position="283"/>
    </location>
</feature>
<feature type="region of interest" description="C-domain">
    <location>
        <begin position="295"/>
        <end position="384"/>
    </location>
</feature>
<feature type="short sequence motif" description="Prevents secretion from ER" evidence="4">
    <location>
        <begin position="381"/>
        <end position="384"/>
    </location>
</feature>
<feature type="binding site" evidence="2">
    <location>
        <position position="109"/>
    </location>
    <ligand>
        <name>an alpha-D-glucoside</name>
        <dbReference type="ChEBI" id="CHEBI:22390"/>
    </ligand>
</feature>
<feature type="binding site" evidence="2">
    <location>
        <position position="111"/>
    </location>
    <ligand>
        <name>an alpha-D-glucoside</name>
        <dbReference type="ChEBI" id="CHEBI:22390"/>
    </ligand>
</feature>
<feature type="binding site" evidence="2">
    <location>
        <position position="128"/>
    </location>
    <ligand>
        <name>an alpha-D-glucoside</name>
        <dbReference type="ChEBI" id="CHEBI:22390"/>
    </ligand>
</feature>
<feature type="binding site" evidence="2">
    <location>
        <position position="135"/>
    </location>
    <ligand>
        <name>an alpha-D-glucoside</name>
        <dbReference type="ChEBI" id="CHEBI:22390"/>
    </ligand>
</feature>
<feature type="binding site" evidence="2">
    <location>
        <position position="303"/>
    </location>
    <ligand>
        <name>an alpha-D-glucoside</name>
        <dbReference type="ChEBI" id="CHEBI:22390"/>
    </ligand>
</feature>
<feature type="glycosylation site" description="N-linked (GlcNAc...) asparagine" evidence="3">
    <location>
        <position position="42"/>
    </location>
</feature>
<feature type="glycosylation site" description="N-linked (GlcNAc...) asparagine" evidence="3">
    <location>
        <position position="201"/>
    </location>
</feature>
<feature type="disulfide bond" evidence="1">
    <location>
        <begin position="105"/>
        <end position="137"/>
    </location>
</feature>
<feature type="sequence variant" id="VAR_027944" description="In dbSNP:rs11544148." evidence="6">
    <original>L</original>
    <variation>F</variation>
    <location>
        <position position="8"/>
    </location>
</feature>
<feature type="sequence variant" id="VAR_065476" description="In dbSNP:rs142951029." evidence="7">
    <original>K</original>
    <variation>R</variation>
    <location>
        <position position="82"/>
    </location>
</feature>
<feature type="sequence variant" id="VAR_027945" description="In dbSNP:rs10411092.">
    <original>D</original>
    <variation>G</variation>
    <location>
        <position position="248"/>
    </location>
</feature>
<feature type="sequence variant" id="VAR_027946" description="In dbSNP:rs12459238.">
    <original>V</original>
    <variation>I</variation>
    <location>
        <position position="274"/>
    </location>
</feature>
<feature type="sequence variant" id="VAR_048589" description="In dbSNP:rs10404156.">
    <original>D</original>
    <variation>N</variation>
    <location>
        <position position="284"/>
    </location>
</feature>
<organism>
    <name type="scientific">Homo sapiens</name>
    <name type="common">Human</name>
    <dbReference type="NCBI Taxonomy" id="9606"/>
    <lineage>
        <taxon>Eukaryota</taxon>
        <taxon>Metazoa</taxon>
        <taxon>Chordata</taxon>
        <taxon>Craniata</taxon>
        <taxon>Vertebrata</taxon>
        <taxon>Euteleostomi</taxon>
        <taxon>Mammalia</taxon>
        <taxon>Eutheria</taxon>
        <taxon>Euarchontoglires</taxon>
        <taxon>Primates</taxon>
        <taxon>Haplorrhini</taxon>
        <taxon>Catarrhini</taxon>
        <taxon>Hominidae</taxon>
        <taxon>Homo</taxon>
    </lineage>
</organism>
<gene>
    <name type="primary">CALR3</name>
    <name type="synonym">CRT2</name>
</gene>
<protein>
    <recommendedName>
        <fullName>Calreticulin-3</fullName>
    </recommendedName>
    <alternativeName>
        <fullName>Calreticulin-2</fullName>
    </alternativeName>
    <alternativeName>
        <fullName>Calsperin</fullName>
    </alternativeName>
</protein>
<name>CALR3_HUMAN</name>
<reference key="1">
    <citation type="journal article" date="2011" name="Histochem. Cell Biol.">
        <title>Calreticulin-2 is localized in the lumen of the endoplasmic reticulum but is not a Ca2+ -binding protein.</title>
        <authorList>
            <person name="Nomura R."/>
            <person name="Orii M."/>
            <person name="Senda T."/>
        </authorList>
    </citation>
    <scope>NUCLEOTIDE SEQUENCE [MRNA]</scope>
    <scope>FUNCTION</scope>
    <scope>SUBCELLULAR LOCATION</scope>
    <scope>LACK OF CALCIUM-BINDING</scope>
</reference>
<reference key="2">
    <citation type="journal article" date="2004" name="Nat. Genet.">
        <title>Complete sequencing and characterization of 21,243 full-length human cDNAs.</title>
        <authorList>
            <person name="Ota T."/>
            <person name="Suzuki Y."/>
            <person name="Nishikawa T."/>
            <person name="Otsuki T."/>
            <person name="Sugiyama T."/>
            <person name="Irie R."/>
            <person name="Wakamatsu A."/>
            <person name="Hayashi K."/>
            <person name="Sato H."/>
            <person name="Nagai K."/>
            <person name="Kimura K."/>
            <person name="Makita H."/>
            <person name="Sekine M."/>
            <person name="Obayashi M."/>
            <person name="Nishi T."/>
            <person name="Shibahara T."/>
            <person name="Tanaka T."/>
            <person name="Ishii S."/>
            <person name="Yamamoto J."/>
            <person name="Saito K."/>
            <person name="Kawai Y."/>
            <person name="Isono Y."/>
            <person name="Nakamura Y."/>
            <person name="Nagahari K."/>
            <person name="Murakami K."/>
            <person name="Yasuda T."/>
            <person name="Iwayanagi T."/>
            <person name="Wagatsuma M."/>
            <person name="Shiratori A."/>
            <person name="Sudo H."/>
            <person name="Hosoiri T."/>
            <person name="Kaku Y."/>
            <person name="Kodaira H."/>
            <person name="Kondo H."/>
            <person name="Sugawara M."/>
            <person name="Takahashi M."/>
            <person name="Kanda K."/>
            <person name="Yokoi T."/>
            <person name="Furuya T."/>
            <person name="Kikkawa E."/>
            <person name="Omura Y."/>
            <person name="Abe K."/>
            <person name="Kamihara K."/>
            <person name="Katsuta N."/>
            <person name="Sato K."/>
            <person name="Tanikawa M."/>
            <person name="Yamazaki M."/>
            <person name="Ninomiya K."/>
            <person name="Ishibashi T."/>
            <person name="Yamashita H."/>
            <person name="Murakawa K."/>
            <person name="Fujimori K."/>
            <person name="Tanai H."/>
            <person name="Kimata M."/>
            <person name="Watanabe M."/>
            <person name="Hiraoka S."/>
            <person name="Chiba Y."/>
            <person name="Ishida S."/>
            <person name="Ono Y."/>
            <person name="Takiguchi S."/>
            <person name="Watanabe S."/>
            <person name="Yosida M."/>
            <person name="Hotuta T."/>
            <person name="Kusano J."/>
            <person name="Kanehori K."/>
            <person name="Takahashi-Fujii A."/>
            <person name="Hara H."/>
            <person name="Tanase T.-O."/>
            <person name="Nomura Y."/>
            <person name="Togiya S."/>
            <person name="Komai F."/>
            <person name="Hara R."/>
            <person name="Takeuchi K."/>
            <person name="Arita M."/>
            <person name="Imose N."/>
            <person name="Musashino K."/>
            <person name="Yuuki H."/>
            <person name="Oshima A."/>
            <person name="Sasaki N."/>
            <person name="Aotsuka S."/>
            <person name="Yoshikawa Y."/>
            <person name="Matsunawa H."/>
            <person name="Ichihara T."/>
            <person name="Shiohata N."/>
            <person name="Sano S."/>
            <person name="Moriya S."/>
            <person name="Momiyama H."/>
            <person name="Satoh N."/>
            <person name="Takami S."/>
            <person name="Terashima Y."/>
            <person name="Suzuki O."/>
            <person name="Nakagawa S."/>
            <person name="Senoh A."/>
            <person name="Mizoguchi H."/>
            <person name="Goto Y."/>
            <person name="Shimizu F."/>
            <person name="Wakebe H."/>
            <person name="Hishigaki H."/>
            <person name="Watanabe T."/>
            <person name="Sugiyama A."/>
            <person name="Takemoto M."/>
            <person name="Kawakami B."/>
            <person name="Yamazaki M."/>
            <person name="Watanabe K."/>
            <person name="Kumagai A."/>
            <person name="Itakura S."/>
            <person name="Fukuzumi Y."/>
            <person name="Fujimori Y."/>
            <person name="Komiyama M."/>
            <person name="Tashiro H."/>
            <person name="Tanigami A."/>
            <person name="Fujiwara T."/>
            <person name="Ono T."/>
            <person name="Yamada K."/>
            <person name="Fujii Y."/>
            <person name="Ozaki K."/>
            <person name="Hirao M."/>
            <person name="Ohmori Y."/>
            <person name="Kawabata A."/>
            <person name="Hikiji T."/>
            <person name="Kobatake N."/>
            <person name="Inagaki H."/>
            <person name="Ikema Y."/>
            <person name="Okamoto S."/>
            <person name="Okitani R."/>
            <person name="Kawakami T."/>
            <person name="Noguchi S."/>
            <person name="Itoh T."/>
            <person name="Shigeta K."/>
            <person name="Senba T."/>
            <person name="Matsumura K."/>
            <person name="Nakajima Y."/>
            <person name="Mizuno T."/>
            <person name="Morinaga M."/>
            <person name="Sasaki M."/>
            <person name="Togashi T."/>
            <person name="Oyama M."/>
            <person name="Hata H."/>
            <person name="Watanabe M."/>
            <person name="Komatsu T."/>
            <person name="Mizushima-Sugano J."/>
            <person name="Satoh T."/>
            <person name="Shirai Y."/>
            <person name="Takahashi Y."/>
            <person name="Nakagawa K."/>
            <person name="Okumura K."/>
            <person name="Nagase T."/>
            <person name="Nomura N."/>
            <person name="Kikuchi H."/>
            <person name="Masuho Y."/>
            <person name="Yamashita R."/>
            <person name="Nakai K."/>
            <person name="Yada T."/>
            <person name="Nakamura Y."/>
            <person name="Ohara O."/>
            <person name="Isogai T."/>
            <person name="Sugano S."/>
        </authorList>
    </citation>
    <scope>NUCLEOTIDE SEQUENCE [LARGE SCALE MRNA]</scope>
    <source>
        <tissue>Testis</tissue>
    </source>
</reference>
<reference key="3">
    <citation type="journal article" date="2004" name="Nature">
        <title>The DNA sequence and biology of human chromosome 19.</title>
        <authorList>
            <person name="Grimwood J."/>
            <person name="Gordon L.A."/>
            <person name="Olsen A.S."/>
            <person name="Terry A."/>
            <person name="Schmutz J."/>
            <person name="Lamerdin J.E."/>
            <person name="Hellsten U."/>
            <person name="Goodstein D."/>
            <person name="Couronne O."/>
            <person name="Tran-Gyamfi M."/>
            <person name="Aerts A."/>
            <person name="Altherr M."/>
            <person name="Ashworth L."/>
            <person name="Bajorek E."/>
            <person name="Black S."/>
            <person name="Branscomb E."/>
            <person name="Caenepeel S."/>
            <person name="Carrano A.V."/>
            <person name="Caoile C."/>
            <person name="Chan Y.M."/>
            <person name="Christensen M."/>
            <person name="Cleland C.A."/>
            <person name="Copeland A."/>
            <person name="Dalin E."/>
            <person name="Dehal P."/>
            <person name="Denys M."/>
            <person name="Detter J.C."/>
            <person name="Escobar J."/>
            <person name="Flowers D."/>
            <person name="Fotopulos D."/>
            <person name="Garcia C."/>
            <person name="Georgescu A.M."/>
            <person name="Glavina T."/>
            <person name="Gomez M."/>
            <person name="Gonzales E."/>
            <person name="Groza M."/>
            <person name="Hammon N."/>
            <person name="Hawkins T."/>
            <person name="Haydu L."/>
            <person name="Ho I."/>
            <person name="Huang W."/>
            <person name="Israni S."/>
            <person name="Jett J."/>
            <person name="Kadner K."/>
            <person name="Kimball H."/>
            <person name="Kobayashi A."/>
            <person name="Larionov V."/>
            <person name="Leem S.-H."/>
            <person name="Lopez F."/>
            <person name="Lou Y."/>
            <person name="Lowry S."/>
            <person name="Malfatti S."/>
            <person name="Martinez D."/>
            <person name="McCready P.M."/>
            <person name="Medina C."/>
            <person name="Morgan J."/>
            <person name="Nelson K."/>
            <person name="Nolan M."/>
            <person name="Ovcharenko I."/>
            <person name="Pitluck S."/>
            <person name="Pollard M."/>
            <person name="Popkie A.P."/>
            <person name="Predki P."/>
            <person name="Quan G."/>
            <person name="Ramirez L."/>
            <person name="Rash S."/>
            <person name="Retterer J."/>
            <person name="Rodriguez A."/>
            <person name="Rogers S."/>
            <person name="Salamov A."/>
            <person name="Salazar A."/>
            <person name="She X."/>
            <person name="Smith D."/>
            <person name="Slezak T."/>
            <person name="Solovyev V."/>
            <person name="Thayer N."/>
            <person name="Tice H."/>
            <person name="Tsai M."/>
            <person name="Ustaszewska A."/>
            <person name="Vo N."/>
            <person name="Wagner M."/>
            <person name="Wheeler J."/>
            <person name="Wu K."/>
            <person name="Xie G."/>
            <person name="Yang J."/>
            <person name="Dubchak I."/>
            <person name="Furey T.S."/>
            <person name="DeJong P."/>
            <person name="Dickson M."/>
            <person name="Gordon D."/>
            <person name="Eichler E.E."/>
            <person name="Pennacchio L.A."/>
            <person name="Richardson P."/>
            <person name="Stubbs L."/>
            <person name="Rokhsar D.S."/>
            <person name="Myers R.M."/>
            <person name="Rubin E.M."/>
            <person name="Lucas S.M."/>
        </authorList>
    </citation>
    <scope>NUCLEOTIDE SEQUENCE [LARGE SCALE GENOMIC DNA]</scope>
</reference>
<reference key="4">
    <citation type="submission" date="2005-07" db="EMBL/GenBank/DDBJ databases">
        <authorList>
            <person name="Mural R.J."/>
            <person name="Istrail S."/>
            <person name="Sutton G.G."/>
            <person name="Florea L."/>
            <person name="Halpern A.L."/>
            <person name="Mobarry C.M."/>
            <person name="Lippert R."/>
            <person name="Walenz B."/>
            <person name="Shatkay H."/>
            <person name="Dew I."/>
            <person name="Miller J.R."/>
            <person name="Flanigan M.J."/>
            <person name="Edwards N.J."/>
            <person name="Bolanos R."/>
            <person name="Fasulo D."/>
            <person name="Halldorsson B.V."/>
            <person name="Hannenhalli S."/>
            <person name="Turner R."/>
            <person name="Yooseph S."/>
            <person name="Lu F."/>
            <person name="Nusskern D.R."/>
            <person name="Shue B.C."/>
            <person name="Zheng X.H."/>
            <person name="Zhong F."/>
            <person name="Delcher A.L."/>
            <person name="Huson D.H."/>
            <person name="Kravitz S.A."/>
            <person name="Mouchard L."/>
            <person name="Reinert K."/>
            <person name="Remington K.A."/>
            <person name="Clark A.G."/>
            <person name="Waterman M.S."/>
            <person name="Eichler E.E."/>
            <person name="Adams M.D."/>
            <person name="Hunkapiller M.W."/>
            <person name="Myers E.W."/>
            <person name="Venter J.C."/>
        </authorList>
    </citation>
    <scope>NUCLEOTIDE SEQUENCE [LARGE SCALE GENOMIC DNA]</scope>
</reference>
<reference key="5">
    <citation type="journal article" date="2004" name="Genome Res.">
        <title>The status, quality, and expansion of the NIH full-length cDNA project: the Mammalian Gene Collection (MGC).</title>
        <authorList>
            <consortium name="The MGC Project Team"/>
        </authorList>
    </citation>
    <scope>NUCLEOTIDE SEQUENCE [LARGE SCALE MRNA]</scope>
    <scope>VARIANT PHE-8</scope>
    <source>
        <tissue>Testis</tissue>
    </source>
</reference>
<reference key="6">
    <citation type="journal article" date="2002" name="Gene">
        <title>Identification of a novel calreticulin isoform (Crt2) in human and mouse.</title>
        <authorList>
            <person name="Persson S."/>
            <person name="Rosenquist M."/>
            <person name="Sommarin M."/>
        </authorList>
    </citation>
    <scope>IDENTIFICATION</scope>
    <scope>TISSUE SPECIFICITY</scope>
</reference>
<reference key="7">
    <citation type="journal article" date="2014" name="J. Proteomics">
        <title>An enzyme assisted RP-RPLC approach for in-depth analysis of human liver phosphoproteome.</title>
        <authorList>
            <person name="Bian Y."/>
            <person name="Song C."/>
            <person name="Cheng K."/>
            <person name="Dong M."/>
            <person name="Wang F."/>
            <person name="Huang J."/>
            <person name="Sun D."/>
            <person name="Wang L."/>
            <person name="Ye M."/>
            <person name="Zou H."/>
        </authorList>
    </citation>
    <scope>IDENTIFICATION BY MASS SPECTROMETRY [LARGE SCALE ANALYSIS]</scope>
    <source>
        <tissue>Liver</tissue>
    </source>
</reference>
<reference key="8">
    <citation type="journal article" date="2007" name="J. Mol. Cell. Cardiol.">
        <title>Genetic screening of calcium regulation genes in familial hypertrophic cardiomyopathy.</title>
        <authorList>
            <person name="Chiu C."/>
            <person name="Tebo M."/>
            <person name="Ingles J."/>
            <person name="Yeates L."/>
            <person name="Arthur J.W."/>
            <person name="Lind J.M."/>
            <person name="Semsarian C."/>
        </authorList>
    </citation>
    <scope>VARIANT ARG-82</scope>
</reference>
<proteinExistence type="evidence at protein level"/>